<evidence type="ECO:0000255" key="1">
    <source>
        <dbReference type="HAMAP-Rule" id="MF_01929"/>
    </source>
</evidence>
<evidence type="ECO:0007829" key="2">
    <source>
        <dbReference type="PDB" id="3LP6"/>
    </source>
</evidence>
<keyword id="KW-0002">3D-structure</keyword>
<keyword id="KW-0413">Isomerase</keyword>
<keyword id="KW-0658">Purine biosynthesis</keyword>
<keyword id="KW-1185">Reference proteome</keyword>
<gene>
    <name evidence="1" type="primary">purE</name>
    <name type="ordered locus">Rv3275c</name>
    <name type="ORF">MTCY71.15c</name>
</gene>
<accession>P9WHM1</accession>
<accession>L0TF53</accession>
<accession>P96880</accession>
<feature type="chain" id="PRO_0000074977" description="N5-carboxyaminoimidazole ribonucleotide mutase">
    <location>
        <begin position="1"/>
        <end position="174"/>
    </location>
</feature>
<feature type="binding site" evidence="1">
    <location>
        <position position="16"/>
    </location>
    <ligand>
        <name>substrate</name>
    </ligand>
</feature>
<feature type="binding site" evidence="1">
    <location>
        <position position="19"/>
    </location>
    <ligand>
        <name>substrate</name>
    </ligand>
</feature>
<feature type="binding site" evidence="1">
    <location>
        <position position="46"/>
    </location>
    <ligand>
        <name>substrate</name>
    </ligand>
</feature>
<feature type="strand" evidence="2">
    <location>
        <begin position="9"/>
        <end position="15"/>
    </location>
</feature>
<feature type="helix" evidence="2">
    <location>
        <begin position="17"/>
        <end position="19"/>
    </location>
</feature>
<feature type="helix" evidence="2">
    <location>
        <begin position="20"/>
        <end position="32"/>
    </location>
</feature>
<feature type="strand" evidence="2">
    <location>
        <begin position="37"/>
        <end position="41"/>
    </location>
</feature>
<feature type="turn" evidence="2">
    <location>
        <begin position="44"/>
        <end position="46"/>
    </location>
</feature>
<feature type="helix" evidence="2">
    <location>
        <begin position="48"/>
        <end position="61"/>
    </location>
</feature>
<feature type="strand" evidence="2">
    <location>
        <begin position="65"/>
        <end position="73"/>
    </location>
</feature>
<feature type="helix" evidence="2">
    <location>
        <begin position="76"/>
        <end position="83"/>
    </location>
</feature>
<feature type="strand" evidence="2">
    <location>
        <begin position="88"/>
        <end position="93"/>
    </location>
</feature>
<feature type="helix" evidence="2">
    <location>
        <begin position="98"/>
        <end position="100"/>
    </location>
</feature>
<feature type="helix" evidence="2">
    <location>
        <begin position="101"/>
        <end position="108"/>
    </location>
</feature>
<feature type="helix" evidence="2">
    <location>
        <begin position="124"/>
        <end position="136"/>
    </location>
</feature>
<feature type="helix" evidence="2">
    <location>
        <begin position="140"/>
        <end position="167"/>
    </location>
</feature>
<name>PURE_MYCTU</name>
<protein>
    <recommendedName>
        <fullName evidence="1">N5-carboxyaminoimidazole ribonucleotide mutase</fullName>
        <shortName evidence="1">N5-CAIR mutase</shortName>
        <ecNumber evidence="1">5.4.99.18</ecNumber>
    </recommendedName>
    <alternativeName>
        <fullName evidence="1">5-(carboxyamino)imidazole ribonucleotide mutase</fullName>
    </alternativeName>
</protein>
<sequence length="174" mass="17675">MTPAGERPRVGVIMGSDSDWPVMADAAAALAEFDIPAEVRVVSAHRTPEAMFSYARGAAERGLEVIIAGAGGAAHLPGMVAAATPLPVIGVPVPLGRLDGLDSLLSIVQMPAGVPVATVSIGGAGNAGLLAVRMLGAANPQLRARIVAFQDRLADVVAAKDAELQRLAGKLTRD</sequence>
<reference key="1">
    <citation type="journal article" date="1998" name="Nature">
        <title>Deciphering the biology of Mycobacterium tuberculosis from the complete genome sequence.</title>
        <authorList>
            <person name="Cole S.T."/>
            <person name="Brosch R."/>
            <person name="Parkhill J."/>
            <person name="Garnier T."/>
            <person name="Churcher C.M."/>
            <person name="Harris D.E."/>
            <person name="Gordon S.V."/>
            <person name="Eiglmeier K."/>
            <person name="Gas S."/>
            <person name="Barry C.E. III"/>
            <person name="Tekaia F."/>
            <person name="Badcock K."/>
            <person name="Basham D."/>
            <person name="Brown D."/>
            <person name="Chillingworth T."/>
            <person name="Connor R."/>
            <person name="Davies R.M."/>
            <person name="Devlin K."/>
            <person name="Feltwell T."/>
            <person name="Gentles S."/>
            <person name="Hamlin N."/>
            <person name="Holroyd S."/>
            <person name="Hornsby T."/>
            <person name="Jagels K."/>
            <person name="Krogh A."/>
            <person name="McLean J."/>
            <person name="Moule S."/>
            <person name="Murphy L.D."/>
            <person name="Oliver S."/>
            <person name="Osborne J."/>
            <person name="Quail M.A."/>
            <person name="Rajandream M.A."/>
            <person name="Rogers J."/>
            <person name="Rutter S."/>
            <person name="Seeger K."/>
            <person name="Skelton S."/>
            <person name="Squares S."/>
            <person name="Squares R."/>
            <person name="Sulston J.E."/>
            <person name="Taylor K."/>
            <person name="Whitehead S."/>
            <person name="Barrell B.G."/>
        </authorList>
    </citation>
    <scope>NUCLEOTIDE SEQUENCE [LARGE SCALE GENOMIC DNA]</scope>
    <source>
        <strain>ATCC 25618 / H37Rv</strain>
    </source>
</reference>
<reference key="2">
    <citation type="journal article" date="2008" name="BMC Syst. Biol.">
        <title>targetTB: a target identification pipeline for Mycobacterium tuberculosis through an interactome, reactome and genome-scale structural analysis.</title>
        <authorList>
            <person name="Raman K."/>
            <person name="Yeturu K."/>
            <person name="Chandra N."/>
        </authorList>
    </citation>
    <scope>IDENTIFICATION AS A DRUG TARGET [LARGE SCALE ANALYSIS]</scope>
</reference>
<reference key="3">
    <citation type="journal article" date="2011" name="Mol. Cell. Proteomics">
        <title>Proteogenomic analysis of Mycobacterium tuberculosis by high resolution mass spectrometry.</title>
        <authorList>
            <person name="Kelkar D.S."/>
            <person name="Kumar D."/>
            <person name="Kumar P."/>
            <person name="Balakrishnan L."/>
            <person name="Muthusamy B."/>
            <person name="Yadav A.K."/>
            <person name="Shrivastava P."/>
            <person name="Marimuthu A."/>
            <person name="Anand S."/>
            <person name="Sundaram H."/>
            <person name="Kingsbury R."/>
            <person name="Harsha H.C."/>
            <person name="Nair B."/>
            <person name="Prasad T.S."/>
            <person name="Chauhan D.S."/>
            <person name="Katoch K."/>
            <person name="Katoch V.M."/>
            <person name="Kumar P."/>
            <person name="Chaerkady R."/>
            <person name="Ramachandran S."/>
            <person name="Dash D."/>
            <person name="Pandey A."/>
        </authorList>
    </citation>
    <scope>IDENTIFICATION BY MASS SPECTROMETRY [LARGE SCALE ANALYSIS]</scope>
    <source>
        <strain>ATCC 25618 / H37Rv</strain>
    </source>
</reference>
<dbReference type="EC" id="5.4.99.18" evidence="1"/>
<dbReference type="EMBL" id="AL123456">
    <property type="protein sequence ID" value="CCP46094.1"/>
    <property type="molecule type" value="Genomic_DNA"/>
</dbReference>
<dbReference type="PIR" id="D70979">
    <property type="entry name" value="D70979"/>
</dbReference>
<dbReference type="RefSeq" id="NP_217792.1">
    <property type="nucleotide sequence ID" value="NC_000962.3"/>
</dbReference>
<dbReference type="RefSeq" id="WP_003899997.1">
    <property type="nucleotide sequence ID" value="NZ_NVQJ01000003.1"/>
</dbReference>
<dbReference type="PDB" id="3LP6">
    <property type="method" value="X-ray"/>
    <property type="resolution" value="1.70 A"/>
    <property type="chains" value="A/B/C/D=1-174"/>
</dbReference>
<dbReference type="PDBsum" id="3LP6"/>
<dbReference type="SMR" id="P9WHM1"/>
<dbReference type="FunCoup" id="P9WHM1">
    <property type="interactions" value="48"/>
</dbReference>
<dbReference type="STRING" id="83332.Rv3275c"/>
<dbReference type="PaxDb" id="83332-Rv3275c"/>
<dbReference type="GeneID" id="888721"/>
<dbReference type="KEGG" id="mtu:Rv3275c"/>
<dbReference type="KEGG" id="mtv:RVBD_3275c"/>
<dbReference type="TubercuList" id="Rv3275c"/>
<dbReference type="eggNOG" id="COG0041">
    <property type="taxonomic scope" value="Bacteria"/>
</dbReference>
<dbReference type="InParanoid" id="P9WHM1"/>
<dbReference type="OrthoDB" id="9791908at2"/>
<dbReference type="PhylomeDB" id="P9WHM1"/>
<dbReference type="UniPathway" id="UPA00074">
    <property type="reaction ID" value="UER00943"/>
</dbReference>
<dbReference type="EvolutionaryTrace" id="P9WHM1"/>
<dbReference type="Proteomes" id="UP000001584">
    <property type="component" value="Chromosome"/>
</dbReference>
<dbReference type="GO" id="GO:0034023">
    <property type="term" value="F:5-(carboxyamino)imidazole ribonucleotide mutase activity"/>
    <property type="evidence" value="ECO:0007669"/>
    <property type="project" value="UniProtKB-UniRule"/>
</dbReference>
<dbReference type="GO" id="GO:0006189">
    <property type="term" value="P:'de novo' IMP biosynthetic process"/>
    <property type="evidence" value="ECO:0007669"/>
    <property type="project" value="UniProtKB-UniRule"/>
</dbReference>
<dbReference type="Gene3D" id="3.40.50.1970">
    <property type="match status" value="1"/>
</dbReference>
<dbReference type="HAMAP" id="MF_01929">
    <property type="entry name" value="PurE_classI"/>
    <property type="match status" value="1"/>
</dbReference>
<dbReference type="InterPro" id="IPR033747">
    <property type="entry name" value="PurE_ClassI"/>
</dbReference>
<dbReference type="InterPro" id="IPR000031">
    <property type="entry name" value="PurE_dom"/>
</dbReference>
<dbReference type="InterPro" id="IPR024694">
    <property type="entry name" value="PurE_prokaryotes"/>
</dbReference>
<dbReference type="NCBIfam" id="TIGR01162">
    <property type="entry name" value="purE"/>
    <property type="match status" value="1"/>
</dbReference>
<dbReference type="PANTHER" id="PTHR23046:SF2">
    <property type="entry name" value="PHOSPHORIBOSYLAMINOIMIDAZOLE CARBOXYLASE"/>
    <property type="match status" value="1"/>
</dbReference>
<dbReference type="PANTHER" id="PTHR23046">
    <property type="entry name" value="PHOSPHORIBOSYLAMINOIMIDAZOLE CARBOXYLASE CATALYTIC SUBUNIT"/>
    <property type="match status" value="1"/>
</dbReference>
<dbReference type="Pfam" id="PF00731">
    <property type="entry name" value="AIRC"/>
    <property type="match status" value="1"/>
</dbReference>
<dbReference type="PIRSF" id="PIRSF001338">
    <property type="entry name" value="AIR_carboxylase"/>
    <property type="match status" value="1"/>
</dbReference>
<dbReference type="SMART" id="SM01001">
    <property type="entry name" value="AIRC"/>
    <property type="match status" value="1"/>
</dbReference>
<dbReference type="SUPFAM" id="SSF52255">
    <property type="entry name" value="N5-CAIR mutase (phosphoribosylaminoimidazole carboxylase, PurE)"/>
    <property type="match status" value="1"/>
</dbReference>
<comment type="function">
    <text evidence="1">Catalyzes the conversion of N5-carboxyaminoimidazole ribonucleotide (N5-CAIR) to 4-carboxy-5-aminoimidazole ribonucleotide (CAIR).</text>
</comment>
<comment type="catalytic activity">
    <reaction evidence="1">
        <text>5-carboxyamino-1-(5-phospho-D-ribosyl)imidazole + H(+) = 5-amino-1-(5-phospho-D-ribosyl)imidazole-4-carboxylate</text>
        <dbReference type="Rhea" id="RHEA:13193"/>
        <dbReference type="ChEBI" id="CHEBI:15378"/>
        <dbReference type="ChEBI" id="CHEBI:58730"/>
        <dbReference type="ChEBI" id="CHEBI:77657"/>
        <dbReference type="EC" id="5.4.99.18"/>
    </reaction>
</comment>
<comment type="pathway">
    <text evidence="1">Purine metabolism; IMP biosynthesis via de novo pathway; 5-amino-1-(5-phospho-D-ribosyl)imidazole-4-carboxylate from 5-amino-1-(5-phospho-D-ribosyl)imidazole (N5-CAIR route): step 2/2.</text>
</comment>
<comment type="miscellaneous">
    <text>Was identified as a high-confidence drug target.</text>
</comment>
<comment type="similarity">
    <text evidence="1">Belongs to the AIR carboxylase family. Class I subfamily.</text>
</comment>
<proteinExistence type="evidence at protein level"/>
<organism>
    <name type="scientific">Mycobacterium tuberculosis (strain ATCC 25618 / H37Rv)</name>
    <dbReference type="NCBI Taxonomy" id="83332"/>
    <lineage>
        <taxon>Bacteria</taxon>
        <taxon>Bacillati</taxon>
        <taxon>Actinomycetota</taxon>
        <taxon>Actinomycetes</taxon>
        <taxon>Mycobacteriales</taxon>
        <taxon>Mycobacteriaceae</taxon>
        <taxon>Mycobacterium</taxon>
        <taxon>Mycobacterium tuberculosis complex</taxon>
    </lineage>
</organism>